<comment type="function">
    <text evidence="2 3 5">Involved in the biosynthesis of tetracenomycin C (TCM C) (PubMed:7814341, PubMed:9609708). Part of a type II polyketide synthase (PKS) that catalyzes the synthesis of tetracenomycin F2 (TCM F2), a precursor of TCM C, from malonyl-CoA (PubMed:8248801, PubMed:9609708). TcmK and TcmL form a heterodimeric alpha-beta complex that catalyzes the condensation reactions between the growing acyl-enzyme chain and the malonyl-CoA extender units (PubMed:9609708).</text>
</comment>
<comment type="catalytic activity">
    <reaction evidence="5">
        <text>10 malonyl-CoA + 8 H(+) = tetracenomycin F2 + 10 CO2 + 10 CoA + 2 H2O</text>
        <dbReference type="Rhea" id="RHEA:21348"/>
        <dbReference type="ChEBI" id="CHEBI:15377"/>
        <dbReference type="ChEBI" id="CHEBI:15378"/>
        <dbReference type="ChEBI" id="CHEBI:16526"/>
        <dbReference type="ChEBI" id="CHEBI:57287"/>
        <dbReference type="ChEBI" id="CHEBI:57384"/>
        <dbReference type="ChEBI" id="CHEBI:77982"/>
        <dbReference type="EC" id="2.3.1.235"/>
    </reaction>
    <physiologicalReaction direction="left-to-right" evidence="5">
        <dbReference type="Rhea" id="RHEA:21349"/>
    </physiologicalReaction>
</comment>
<comment type="pathway">
    <text evidence="2 5">Antibiotic biosynthesis; tetracenomycin C biosynthesis.</text>
</comment>
<comment type="subunit">
    <text evidence="3 4 5">The tetracenomycin polyketide synthase (TCM PKS) is composed of a ketosynthase complex (TcmKL), an acyl carrier protein (TcmM), a cyclase (TcmN) and a probable second cyclase (TcmJ) (PubMed:8248801, PubMed:8692863). TcmK and TcmL form a heterodimeric complex (PubMed:9609708).</text>
</comment>
<comment type="similarity">
    <text evidence="8">Belongs to the thiolase-like superfamily. Beta-ketoacyl-ACP synthases family.</text>
</comment>
<name>TCMK_STRGA</name>
<keyword id="KW-0012">Acyltransferase</keyword>
<keyword id="KW-0045">Antibiotic biosynthesis</keyword>
<keyword id="KW-0808">Transferase</keyword>
<gene>
    <name evidence="7" type="primary">tcmK</name>
</gene>
<sequence>MTRHAEKRVVITGIGVRAPGGAGTAAFWDLLTAGRTATRTISLFDAAPYRSRIAGEIDFDPIGEGLSPRQASTYDRATQLAVVCAREALKDSGLDPAAVNPERIGVSIGTAVGCTTGLDREYARVSEGGSRWLVDHTLAVEQLFDYFVPTSICREVAWEAGAEGPVTVVSTGCTSGLDAVGYGTELIRDGRADVVVCGATDAPISPITVACFDAIKATSANNDDPAHASRPFDRNRDGFVLGEGSAVFVLEELSAARRRGAHAYAEVRGFATRSNAFHMTGLKPDGREMAEAITAALDQARRTGDDLHYINAHGSGTRQNDRHETAAFKRSLGQRAYDVPVSSIKSMIGHSLGAIGSLELAACALAIEHGVIPPTANYEEPDPECDLDYVPNVAREQRVDTVLSVGSGFGGFQSAAVLARPKETRS</sequence>
<protein>
    <recommendedName>
        <fullName evidence="8">Tetracenomycin polyketide synthase ketoacyl synthase alpha subunit</fullName>
        <ecNumber evidence="5">2.3.1.235</ecNumber>
    </recommendedName>
    <alternativeName>
        <fullName evidence="6">TCM PKS</fullName>
    </alternativeName>
</protein>
<accession>P16538</accession>
<proteinExistence type="evidence at protein level"/>
<evidence type="ECO:0000255" key="1">
    <source>
        <dbReference type="PROSITE-ProRule" id="PRU01348"/>
    </source>
</evidence>
<evidence type="ECO:0000269" key="2">
    <source>
    </source>
</evidence>
<evidence type="ECO:0000269" key="3">
    <source>
    </source>
</evidence>
<evidence type="ECO:0000269" key="4">
    <source>
    </source>
</evidence>
<evidence type="ECO:0000269" key="5">
    <source>
    </source>
</evidence>
<evidence type="ECO:0000303" key="6">
    <source>
    </source>
</evidence>
<evidence type="ECO:0000303" key="7">
    <source>
    </source>
</evidence>
<evidence type="ECO:0000305" key="8"/>
<reference key="1">
    <citation type="journal article" date="1989" name="EMBO J.">
        <title>Analysis of the nucleotide sequence of the Streptomyces glaucescens tcmI genes provides key information about the enzymology of polyketide antibiotic biosynthesis.</title>
        <authorList>
            <person name="Bibb M.J."/>
            <person name="Biro S."/>
            <person name="Motamedi H."/>
            <person name="Collins J.F."/>
            <person name="Hutchinson C.R."/>
        </authorList>
    </citation>
    <scope>NUCLEOTIDE SEQUENCE [GENOMIC DNA]</scope>
    <source>
        <strain>DSM 40716 / ETH 22794 / Tue 49</strain>
    </source>
</reference>
<reference key="2">
    <citation type="journal article" date="1993" name="J. Bacteriol.">
        <title>The tcmVI region of the tetracenomycin C biosynthetic gene cluster of Streptomyces glaucescens encodes the tetracenomycin F1 monooxygenase, tetracenomycin F2 cyclase, and, most likely, a second cyclase.</title>
        <authorList>
            <person name="Summers R.G."/>
            <person name="Wendt-Pienkowski E."/>
            <person name="Motamedi H."/>
            <person name="Hutchinson C.R."/>
        </authorList>
    </citation>
    <scope>NUCLEOTIDE SEQUENCE [GENOMIC DNA]</scope>
    <source>
        <strain>DSM 40716 / ETH 22794 / Tue 49</strain>
    </source>
</reference>
<reference key="3">
    <citation type="journal article" date="1993" name="Science">
        <title>Enzymatic synthesis of a bacterial polyketide from acetyl and malonyl coenzyme A.</title>
        <authorList>
            <person name="Shen B."/>
            <person name="Hutchinson C.R."/>
        </authorList>
    </citation>
    <scope>FUNCTION</scope>
    <scope>SUBUNIT</scope>
    <source>
        <strain>DSM 40716 / ETH 22794 / Tue 49</strain>
    </source>
</reference>
<reference key="4">
    <citation type="journal article" date="1995" name="J. Bacteriol.">
        <title>Functional analysis of putative beta-ketoacyl:acyl carrier protein synthase and acyltransferase active site motifs in a type II polyketide synthase of Streptomyces glaucescens.</title>
        <authorList>
            <person name="Meurer G."/>
            <person name="Hutchinson C.R."/>
        </authorList>
    </citation>
    <scope>FUNCTION</scope>
    <scope>PATHWAY</scope>
    <scope>MUTAGENESIS OF CYS-173; 350-HIS-SER-351 AND SER-351</scope>
</reference>
<reference key="5">
    <citation type="journal article" date="1996" name="Proc. Natl. Acad. Sci. U.S.A.">
        <title>Deciphering the mechanism for the assembly of aromatic polyketides by a bacterial polyketide synthase.</title>
        <authorList>
            <person name="Shen B."/>
            <person name="Hutchinson C.R."/>
        </authorList>
    </citation>
    <scope>SUBUNIT</scope>
    <source>
        <strain>DSM 40716 / ETH 22794 / Tue 49</strain>
    </source>
</reference>
<reference key="6">
    <citation type="journal article" date="1998" name="Biochemistry">
        <title>Reconstitution of the iterative type II polyketide synthase for tetracenomycin F2 biosynthesis.</title>
        <authorList>
            <person name="Bao W."/>
            <person name="Wendt-Pienkowski E."/>
            <person name="Hutchinson C.R."/>
        </authorList>
    </citation>
    <scope>FUNCTION</scope>
    <scope>CATALYTIC ACTIVITY</scope>
    <scope>PATHWAY</scope>
    <scope>SUBUNIT</scope>
    <source>
        <strain>DSM 40716 / ETH 22794 / Tue 49</strain>
    </source>
</reference>
<dbReference type="EC" id="2.3.1.235" evidence="5"/>
<dbReference type="EMBL" id="X15312">
    <property type="protein sequence ID" value="CAA33369.1"/>
    <property type="molecule type" value="Genomic_DNA"/>
</dbReference>
<dbReference type="EMBL" id="M80674">
    <property type="protein sequence ID" value="AAA67515.1"/>
    <property type="molecule type" value="Genomic_DNA"/>
</dbReference>
<dbReference type="PIR" id="S05973">
    <property type="entry name" value="S05973"/>
</dbReference>
<dbReference type="RefSeq" id="WP_043504915.1">
    <property type="nucleotide sequence ID" value="NZ_CP009438.1"/>
</dbReference>
<dbReference type="SMR" id="P16538"/>
<dbReference type="STRING" id="1907.SGLAU_26355"/>
<dbReference type="eggNOG" id="COG0304">
    <property type="taxonomic scope" value="Bacteria"/>
</dbReference>
<dbReference type="OrthoDB" id="9808669at2"/>
<dbReference type="BioCyc" id="MetaCyc:MONOMER-18610"/>
<dbReference type="BRENDA" id="2.3.1.235">
    <property type="organism ID" value="6020"/>
</dbReference>
<dbReference type="UniPathway" id="UPA00174"/>
<dbReference type="GO" id="GO:0005829">
    <property type="term" value="C:cytosol"/>
    <property type="evidence" value="ECO:0007669"/>
    <property type="project" value="TreeGrafter"/>
</dbReference>
<dbReference type="GO" id="GO:0004315">
    <property type="term" value="F:3-oxoacyl-[acyl-carrier-protein] synthase activity"/>
    <property type="evidence" value="ECO:0007669"/>
    <property type="project" value="InterPro"/>
</dbReference>
<dbReference type="GO" id="GO:0017000">
    <property type="term" value="P:antibiotic biosynthetic process"/>
    <property type="evidence" value="ECO:0007669"/>
    <property type="project" value="UniProtKB-KW"/>
</dbReference>
<dbReference type="GO" id="GO:0006633">
    <property type="term" value="P:fatty acid biosynthetic process"/>
    <property type="evidence" value="ECO:0007669"/>
    <property type="project" value="InterPro"/>
</dbReference>
<dbReference type="CDD" id="cd00834">
    <property type="entry name" value="KAS_I_II"/>
    <property type="match status" value="1"/>
</dbReference>
<dbReference type="FunFam" id="3.40.47.10:FF:000029">
    <property type="entry name" value="3-oxoacyl-[acyl-carrier-protein] synthase 1"/>
    <property type="match status" value="1"/>
</dbReference>
<dbReference type="FunFam" id="3.40.47.10:FF:000018">
    <property type="entry name" value="3-oxoacyl-[acyl-carrier-protein] synthase 2"/>
    <property type="match status" value="1"/>
</dbReference>
<dbReference type="Gene3D" id="3.40.47.10">
    <property type="match status" value="2"/>
</dbReference>
<dbReference type="InterPro" id="IPR000794">
    <property type="entry name" value="Beta-ketoacyl_synthase"/>
</dbReference>
<dbReference type="InterPro" id="IPR018201">
    <property type="entry name" value="Ketoacyl_synth_AS"/>
</dbReference>
<dbReference type="InterPro" id="IPR014031">
    <property type="entry name" value="Ketoacyl_synth_C"/>
</dbReference>
<dbReference type="InterPro" id="IPR014030">
    <property type="entry name" value="Ketoacyl_synth_N"/>
</dbReference>
<dbReference type="InterPro" id="IPR020841">
    <property type="entry name" value="PKS_Beta-ketoAc_synthase_dom"/>
</dbReference>
<dbReference type="InterPro" id="IPR016039">
    <property type="entry name" value="Thiolase-like"/>
</dbReference>
<dbReference type="NCBIfam" id="NF005589">
    <property type="entry name" value="PRK07314.1"/>
    <property type="match status" value="1"/>
</dbReference>
<dbReference type="PANTHER" id="PTHR11712:SF336">
    <property type="entry name" value="3-OXOACYL-[ACYL-CARRIER-PROTEIN] SYNTHASE, MITOCHONDRIAL"/>
    <property type="match status" value="1"/>
</dbReference>
<dbReference type="PANTHER" id="PTHR11712">
    <property type="entry name" value="POLYKETIDE SYNTHASE-RELATED"/>
    <property type="match status" value="1"/>
</dbReference>
<dbReference type="Pfam" id="PF00109">
    <property type="entry name" value="ketoacyl-synt"/>
    <property type="match status" value="1"/>
</dbReference>
<dbReference type="Pfam" id="PF02801">
    <property type="entry name" value="Ketoacyl-synt_C"/>
    <property type="match status" value="1"/>
</dbReference>
<dbReference type="SMART" id="SM00825">
    <property type="entry name" value="PKS_KS"/>
    <property type="match status" value="1"/>
</dbReference>
<dbReference type="SUPFAM" id="SSF53901">
    <property type="entry name" value="Thiolase-like"/>
    <property type="match status" value="1"/>
</dbReference>
<dbReference type="PROSITE" id="PS00606">
    <property type="entry name" value="KS3_1"/>
    <property type="match status" value="1"/>
</dbReference>
<dbReference type="PROSITE" id="PS52004">
    <property type="entry name" value="KS3_2"/>
    <property type="match status" value="1"/>
</dbReference>
<feature type="chain" id="PRO_0000180337" description="Tetracenomycin polyketide synthase ketoacyl synthase alpha subunit">
    <location>
        <begin position="1"/>
        <end position="426"/>
    </location>
</feature>
<feature type="domain" description="Ketosynthase family 3 (KS3)" evidence="1">
    <location>
        <begin position="6"/>
        <end position="420"/>
    </location>
</feature>
<feature type="active site" description="For beta-ketoacyl synthase activity" evidence="1">
    <location>
        <position position="173"/>
    </location>
</feature>
<feature type="active site" description="For beta-ketoacyl synthase activity" evidence="1">
    <location>
        <position position="313"/>
    </location>
</feature>
<feature type="active site" description="For beta-ketoacyl synthase activity" evidence="1">
    <location>
        <position position="350"/>
    </location>
</feature>
<feature type="mutagenesis site" description="Forms completely inactive PKS complexes." evidence="2">
    <original>C</original>
    <variation>A</variation>
    <variation>S</variation>
    <location>
        <position position="173"/>
    </location>
</feature>
<feature type="mutagenesis site" description="Forms completely inactive PKS complexes." evidence="2">
    <original>HS</original>
    <variation>LA</variation>
    <location>
        <begin position="350"/>
        <end position="351"/>
    </location>
</feature>
<feature type="mutagenesis site" description="Produces high amounts of tetracenomycin F2." evidence="2">
    <original>S</original>
    <variation>A</variation>
    <location>
        <position position="351"/>
    </location>
</feature>
<organism>
    <name type="scientific">Streptomyces glaucescens</name>
    <dbReference type="NCBI Taxonomy" id="1907"/>
    <lineage>
        <taxon>Bacteria</taxon>
        <taxon>Bacillati</taxon>
        <taxon>Actinomycetota</taxon>
        <taxon>Actinomycetes</taxon>
        <taxon>Kitasatosporales</taxon>
        <taxon>Streptomycetaceae</taxon>
        <taxon>Streptomyces</taxon>
    </lineage>
</organism>